<keyword id="KW-1185">Reference proteome</keyword>
<keyword id="KW-0687">Ribonucleoprotein</keyword>
<keyword id="KW-0689">Ribosomal protein</keyword>
<keyword id="KW-0694">RNA-binding</keyword>
<keyword id="KW-0699">rRNA-binding</keyword>
<gene>
    <name evidence="1" type="primary">rpsO</name>
    <name type="ordered locus">MT2855</name>
</gene>
<protein>
    <recommendedName>
        <fullName evidence="1">Small ribosomal subunit protein uS15</fullName>
    </recommendedName>
    <alternativeName>
        <fullName evidence="2">30S ribosomal protein S15</fullName>
    </alternativeName>
</protein>
<dbReference type="EMBL" id="AE000516">
    <property type="protein sequence ID" value="AAK47174.1"/>
    <property type="molecule type" value="Genomic_DNA"/>
</dbReference>
<dbReference type="PIR" id="H70883">
    <property type="entry name" value="H70883"/>
</dbReference>
<dbReference type="RefSeq" id="WP_003414128.1">
    <property type="nucleotide sequence ID" value="NZ_KK341227.1"/>
</dbReference>
<dbReference type="SMR" id="P9WH54"/>
<dbReference type="GeneID" id="45426774"/>
<dbReference type="KEGG" id="mtc:MT2855"/>
<dbReference type="PATRIC" id="fig|83331.31.peg.3078"/>
<dbReference type="HOGENOM" id="CLU_148518_0_0_11"/>
<dbReference type="Proteomes" id="UP000001020">
    <property type="component" value="Chromosome"/>
</dbReference>
<dbReference type="GO" id="GO:0022627">
    <property type="term" value="C:cytosolic small ribosomal subunit"/>
    <property type="evidence" value="ECO:0007669"/>
    <property type="project" value="TreeGrafter"/>
</dbReference>
<dbReference type="GO" id="GO:0019843">
    <property type="term" value="F:rRNA binding"/>
    <property type="evidence" value="ECO:0007669"/>
    <property type="project" value="UniProtKB-UniRule"/>
</dbReference>
<dbReference type="GO" id="GO:0003735">
    <property type="term" value="F:structural constituent of ribosome"/>
    <property type="evidence" value="ECO:0007669"/>
    <property type="project" value="InterPro"/>
</dbReference>
<dbReference type="GO" id="GO:0006412">
    <property type="term" value="P:translation"/>
    <property type="evidence" value="ECO:0007669"/>
    <property type="project" value="UniProtKB-UniRule"/>
</dbReference>
<dbReference type="CDD" id="cd00353">
    <property type="entry name" value="Ribosomal_S15p_S13e"/>
    <property type="match status" value="1"/>
</dbReference>
<dbReference type="FunFam" id="1.10.287.10:FF:000002">
    <property type="entry name" value="30S ribosomal protein S15"/>
    <property type="match status" value="1"/>
</dbReference>
<dbReference type="Gene3D" id="6.10.250.3130">
    <property type="match status" value="1"/>
</dbReference>
<dbReference type="Gene3D" id="1.10.287.10">
    <property type="entry name" value="S15/NS1, RNA-binding"/>
    <property type="match status" value="1"/>
</dbReference>
<dbReference type="HAMAP" id="MF_01343_B">
    <property type="entry name" value="Ribosomal_uS15_B"/>
    <property type="match status" value="1"/>
</dbReference>
<dbReference type="InterPro" id="IPR000589">
    <property type="entry name" value="Ribosomal_uS15"/>
</dbReference>
<dbReference type="InterPro" id="IPR005290">
    <property type="entry name" value="Ribosomal_uS15_bac-type"/>
</dbReference>
<dbReference type="InterPro" id="IPR009068">
    <property type="entry name" value="uS15_NS1_RNA-bd_sf"/>
</dbReference>
<dbReference type="NCBIfam" id="TIGR00952">
    <property type="entry name" value="S15_bact"/>
    <property type="match status" value="1"/>
</dbReference>
<dbReference type="PANTHER" id="PTHR23321">
    <property type="entry name" value="RIBOSOMAL PROTEIN S15, BACTERIAL AND ORGANELLAR"/>
    <property type="match status" value="1"/>
</dbReference>
<dbReference type="PANTHER" id="PTHR23321:SF26">
    <property type="entry name" value="SMALL RIBOSOMAL SUBUNIT PROTEIN US15M"/>
    <property type="match status" value="1"/>
</dbReference>
<dbReference type="Pfam" id="PF00312">
    <property type="entry name" value="Ribosomal_S15"/>
    <property type="match status" value="1"/>
</dbReference>
<dbReference type="SMART" id="SM01387">
    <property type="entry name" value="Ribosomal_S15"/>
    <property type="match status" value="1"/>
</dbReference>
<dbReference type="SUPFAM" id="SSF47060">
    <property type="entry name" value="S15/NS1 RNA-binding domain"/>
    <property type="match status" value="1"/>
</dbReference>
<dbReference type="PROSITE" id="PS00362">
    <property type="entry name" value="RIBOSOMAL_S15"/>
    <property type="match status" value="1"/>
</dbReference>
<name>RS15_MYCTO</name>
<reference key="1">
    <citation type="journal article" date="2002" name="J. Bacteriol.">
        <title>Whole-genome comparison of Mycobacterium tuberculosis clinical and laboratory strains.</title>
        <authorList>
            <person name="Fleischmann R.D."/>
            <person name="Alland D."/>
            <person name="Eisen J.A."/>
            <person name="Carpenter L."/>
            <person name="White O."/>
            <person name="Peterson J.D."/>
            <person name="DeBoy R.T."/>
            <person name="Dodson R.J."/>
            <person name="Gwinn M.L."/>
            <person name="Haft D.H."/>
            <person name="Hickey E.K."/>
            <person name="Kolonay J.F."/>
            <person name="Nelson W.C."/>
            <person name="Umayam L.A."/>
            <person name="Ermolaeva M.D."/>
            <person name="Salzberg S.L."/>
            <person name="Delcher A."/>
            <person name="Utterback T.R."/>
            <person name="Weidman J.F."/>
            <person name="Khouri H.M."/>
            <person name="Gill J."/>
            <person name="Mikula A."/>
            <person name="Bishai W."/>
            <person name="Jacobs W.R. Jr."/>
            <person name="Venter J.C."/>
            <person name="Fraser C.M."/>
        </authorList>
    </citation>
    <scope>NUCLEOTIDE SEQUENCE [LARGE SCALE GENOMIC DNA]</scope>
    <source>
        <strain>CDC 1551 / Oshkosh</strain>
    </source>
</reference>
<comment type="function">
    <text evidence="1">One of the primary rRNA binding proteins, it binds directly to 16S rRNA where it helps nucleate assembly of the platform of the 30S subunit by binding and bridging several RNA helices of the 16S rRNA.</text>
</comment>
<comment type="function">
    <text evidence="1">Forms an intersubunit bridge (bridge B4) with the 23S rRNA of the 50S subunit in the ribosome.</text>
</comment>
<comment type="subunit">
    <text evidence="1">Part of the 30S ribosomal subunit. Forms a bridge to the 50S subunit in the 70S ribosome, contacting the 23S rRNA.</text>
</comment>
<comment type="similarity">
    <text evidence="1">Belongs to the universal ribosomal protein uS15 family.</text>
</comment>
<proteinExistence type="inferred from homology"/>
<evidence type="ECO:0000255" key="1">
    <source>
        <dbReference type="HAMAP-Rule" id="MF_01343"/>
    </source>
</evidence>
<evidence type="ECO:0000305" key="2"/>
<organism>
    <name type="scientific">Mycobacterium tuberculosis (strain CDC 1551 / Oshkosh)</name>
    <dbReference type="NCBI Taxonomy" id="83331"/>
    <lineage>
        <taxon>Bacteria</taxon>
        <taxon>Bacillati</taxon>
        <taxon>Actinomycetota</taxon>
        <taxon>Actinomycetes</taxon>
        <taxon>Mycobacteriales</taxon>
        <taxon>Mycobacteriaceae</taxon>
        <taxon>Mycobacterium</taxon>
        <taxon>Mycobacterium tuberculosis complex</taxon>
    </lineage>
</organism>
<sequence length="89" mass="10475">MALTAEQKKEILRSYGLHETDTGSPEAQIALLTKRIADLTEHLKVHKHDHHSRRGLLLLVGRRRRLIKYISQIDVERYRSLIERLGLRR</sequence>
<feature type="chain" id="PRO_0000428246" description="Small ribosomal subunit protein uS15">
    <location>
        <begin position="1"/>
        <end position="89"/>
    </location>
</feature>
<accession>P9WH54</accession>
<accession>L0TC88</accession>
<accession>O33327</accession>
<accession>P66429</accession>